<sequence>EKGFGFISPTDGSKDVFVHFSAIQTPGFKTLDEGQRVEFTIEQGQK</sequence>
<keyword id="KW-0010">Activator</keyword>
<keyword id="KW-0963">Cytoplasm</keyword>
<keyword id="KW-0238">DNA-binding</keyword>
<keyword id="KW-0346">Stress response</keyword>
<keyword id="KW-0804">Transcription</keyword>
<keyword id="KW-0805">Transcription regulation</keyword>
<evidence type="ECO:0000250" key="1"/>
<feature type="chain" id="PRO_0000100276" description="Major cold-shock protein">
    <location>
        <begin position="1" status="less than"/>
        <end position="46" status="greater than"/>
    </location>
</feature>
<feature type="domain" description="CSD">
    <location>
        <begin position="1" status="less than"/>
        <end position="46" status="greater than"/>
    </location>
</feature>
<feature type="non-terminal residue">
    <location>
        <position position="1"/>
    </location>
</feature>
<feature type="non-terminal residue">
    <location>
        <position position="46"/>
    </location>
</feature>
<reference key="1">
    <citation type="journal article" date="1997" name="J. Ind. Microbiol. Biotechnol.">
        <title>Detection and speciation of bacteria through PCR using universal major cold-shock protein primer oligomers.</title>
        <authorList>
            <person name="Francis K.P."/>
            <person name="Stewart G.S.A.B."/>
        </authorList>
    </citation>
    <scope>NUCLEOTIDE SEQUENCE [GENOMIC DNA]</scope>
</reference>
<name>CSPA_AERHY</name>
<gene>
    <name type="primary">cspA</name>
</gene>
<proteinExistence type="inferred from homology"/>
<dbReference type="EMBL" id="U60026">
    <property type="protein sequence ID" value="AAC80230.1"/>
    <property type="molecule type" value="Genomic_DNA"/>
</dbReference>
<dbReference type="SMR" id="Q44078"/>
<dbReference type="eggNOG" id="COG1278">
    <property type="taxonomic scope" value="Bacteria"/>
</dbReference>
<dbReference type="GO" id="GO:0005829">
    <property type="term" value="C:cytosol"/>
    <property type="evidence" value="ECO:0007669"/>
    <property type="project" value="UniProtKB-ARBA"/>
</dbReference>
<dbReference type="GO" id="GO:0003677">
    <property type="term" value="F:DNA binding"/>
    <property type="evidence" value="ECO:0007669"/>
    <property type="project" value="UniProtKB-KW"/>
</dbReference>
<dbReference type="CDD" id="cd04458">
    <property type="entry name" value="CSP_CDS"/>
    <property type="match status" value="1"/>
</dbReference>
<dbReference type="Gene3D" id="2.40.50.140">
    <property type="entry name" value="Nucleic acid-binding proteins"/>
    <property type="match status" value="1"/>
</dbReference>
<dbReference type="InterPro" id="IPR012156">
    <property type="entry name" value="Cold_shock_CspA"/>
</dbReference>
<dbReference type="InterPro" id="IPR011129">
    <property type="entry name" value="CSD"/>
</dbReference>
<dbReference type="InterPro" id="IPR019844">
    <property type="entry name" value="CSD_CS"/>
</dbReference>
<dbReference type="InterPro" id="IPR002059">
    <property type="entry name" value="CSP_DNA-bd"/>
</dbReference>
<dbReference type="InterPro" id="IPR012340">
    <property type="entry name" value="NA-bd_OB-fold"/>
</dbReference>
<dbReference type="PANTHER" id="PTHR46565">
    <property type="entry name" value="COLD SHOCK DOMAIN PROTEIN 2"/>
    <property type="match status" value="1"/>
</dbReference>
<dbReference type="PANTHER" id="PTHR46565:SF20">
    <property type="entry name" value="COLD SHOCK DOMAIN-CONTAINING PROTEIN 4"/>
    <property type="match status" value="1"/>
</dbReference>
<dbReference type="Pfam" id="PF00313">
    <property type="entry name" value="CSD"/>
    <property type="match status" value="1"/>
</dbReference>
<dbReference type="PIRSF" id="PIRSF002599">
    <property type="entry name" value="Cold_shock_A"/>
    <property type="match status" value="1"/>
</dbReference>
<dbReference type="PRINTS" id="PR00050">
    <property type="entry name" value="COLDSHOCK"/>
</dbReference>
<dbReference type="SMART" id="SM00357">
    <property type="entry name" value="CSP"/>
    <property type="match status" value="1"/>
</dbReference>
<dbReference type="SUPFAM" id="SSF50249">
    <property type="entry name" value="Nucleic acid-binding proteins"/>
    <property type="match status" value="1"/>
</dbReference>
<dbReference type="PROSITE" id="PS00352">
    <property type="entry name" value="CSD_1"/>
    <property type="match status" value="1"/>
</dbReference>
<dbReference type="PROSITE" id="PS51857">
    <property type="entry name" value="CSD_2"/>
    <property type="match status" value="1"/>
</dbReference>
<accession>Q44078</accession>
<comment type="subunit">
    <text evidence="1">Homodimer.</text>
</comment>
<comment type="subcellular location">
    <subcellularLocation>
        <location evidence="1">Cytoplasm</location>
    </subcellularLocation>
</comment>
<comment type="induction">
    <text evidence="1">In response to low temperature.</text>
</comment>
<protein>
    <recommendedName>
        <fullName>Major cold-shock protein</fullName>
    </recommendedName>
</protein>
<organism>
    <name type="scientific">Aeromonas hydrophila</name>
    <dbReference type="NCBI Taxonomy" id="644"/>
    <lineage>
        <taxon>Bacteria</taxon>
        <taxon>Pseudomonadati</taxon>
        <taxon>Pseudomonadota</taxon>
        <taxon>Gammaproteobacteria</taxon>
        <taxon>Aeromonadales</taxon>
        <taxon>Aeromonadaceae</taxon>
        <taxon>Aeromonas</taxon>
    </lineage>
</organism>